<organism>
    <name type="scientific">Oenococcus oeni (strain ATCC BAA-331 / PSU-1)</name>
    <dbReference type="NCBI Taxonomy" id="203123"/>
    <lineage>
        <taxon>Bacteria</taxon>
        <taxon>Bacillati</taxon>
        <taxon>Bacillota</taxon>
        <taxon>Bacilli</taxon>
        <taxon>Lactobacillales</taxon>
        <taxon>Lactobacillaceae</taxon>
        <taxon>Oenococcus</taxon>
    </lineage>
</organism>
<evidence type="ECO:0000255" key="1">
    <source>
        <dbReference type="HAMAP-Rule" id="MF_00805"/>
    </source>
</evidence>
<name>CITD_OENOB</name>
<comment type="function">
    <text evidence="1">Covalent carrier of the coenzyme of citrate lyase.</text>
</comment>
<comment type="subunit">
    <text evidence="1">Oligomer with a subunit composition of (alpha,beta,gamma)6.</text>
</comment>
<comment type="subcellular location">
    <subcellularLocation>
        <location evidence="1">Cytoplasm</location>
    </subcellularLocation>
</comment>
<comment type="similarity">
    <text evidence="1">Belongs to the CitD family.</text>
</comment>
<keyword id="KW-0963">Cytoplasm</keyword>
<keyword id="KW-0597">Phosphoprotein</keyword>
<keyword id="KW-1185">Reference proteome</keyword>
<proteinExistence type="inferred from homology"/>
<protein>
    <recommendedName>
        <fullName evidence="1">Citrate lyase acyl carrier protein</fullName>
    </recommendedName>
    <alternativeName>
        <fullName evidence="1">Citrate lyase gamma chain</fullName>
    </alternativeName>
</protein>
<accession>Q04GP2</accession>
<gene>
    <name evidence="1" type="primary">citD</name>
    <name type="ordered locus">OEOE_0421</name>
</gene>
<dbReference type="EMBL" id="CP000411">
    <property type="protein sequence ID" value="ABJ56380.1"/>
    <property type="molecule type" value="Genomic_DNA"/>
</dbReference>
<dbReference type="RefSeq" id="WP_002817844.1">
    <property type="nucleotide sequence ID" value="NC_008528.1"/>
</dbReference>
<dbReference type="SMR" id="Q04GP2"/>
<dbReference type="STRING" id="203123.OEOE_0421"/>
<dbReference type="GeneID" id="75065215"/>
<dbReference type="KEGG" id="ooe:OEOE_0421"/>
<dbReference type="eggNOG" id="COG3052">
    <property type="taxonomic scope" value="Bacteria"/>
</dbReference>
<dbReference type="HOGENOM" id="CLU_158489_0_0_9"/>
<dbReference type="Proteomes" id="UP000000774">
    <property type="component" value="Chromosome"/>
</dbReference>
<dbReference type="GO" id="GO:0005737">
    <property type="term" value="C:cytoplasm"/>
    <property type="evidence" value="ECO:0007669"/>
    <property type="project" value="UniProtKB-SubCell"/>
</dbReference>
<dbReference type="HAMAP" id="MF_00805">
    <property type="entry name" value="CitD"/>
    <property type="match status" value="1"/>
</dbReference>
<dbReference type="InterPro" id="IPR006495">
    <property type="entry name" value="CitD"/>
</dbReference>
<dbReference type="InterPro" id="IPR023439">
    <property type="entry name" value="Mal_deCO2ase/Cit_lyase_ACP"/>
</dbReference>
<dbReference type="NCBIfam" id="TIGR01608">
    <property type="entry name" value="citD"/>
    <property type="match status" value="1"/>
</dbReference>
<dbReference type="NCBIfam" id="NF009726">
    <property type="entry name" value="PRK13253.1"/>
    <property type="match status" value="1"/>
</dbReference>
<dbReference type="Pfam" id="PF06857">
    <property type="entry name" value="ACP"/>
    <property type="match status" value="1"/>
</dbReference>
<dbReference type="PIRSF" id="PIRSF002736">
    <property type="entry name" value="Citrt_lyas_gamma"/>
    <property type="match status" value="1"/>
</dbReference>
<reference key="1">
    <citation type="journal article" date="2006" name="Proc. Natl. Acad. Sci. U.S.A.">
        <title>Comparative genomics of the lactic acid bacteria.</title>
        <authorList>
            <person name="Makarova K.S."/>
            <person name="Slesarev A."/>
            <person name="Wolf Y.I."/>
            <person name="Sorokin A."/>
            <person name="Mirkin B."/>
            <person name="Koonin E.V."/>
            <person name="Pavlov A."/>
            <person name="Pavlova N."/>
            <person name="Karamychev V."/>
            <person name="Polouchine N."/>
            <person name="Shakhova V."/>
            <person name="Grigoriev I."/>
            <person name="Lou Y."/>
            <person name="Rohksar D."/>
            <person name="Lucas S."/>
            <person name="Huang K."/>
            <person name="Goodstein D.M."/>
            <person name="Hawkins T."/>
            <person name="Plengvidhya V."/>
            <person name="Welker D."/>
            <person name="Hughes J."/>
            <person name="Goh Y."/>
            <person name="Benson A."/>
            <person name="Baldwin K."/>
            <person name="Lee J.-H."/>
            <person name="Diaz-Muniz I."/>
            <person name="Dosti B."/>
            <person name="Smeianov V."/>
            <person name="Wechter W."/>
            <person name="Barabote R."/>
            <person name="Lorca G."/>
            <person name="Altermann E."/>
            <person name="Barrangou R."/>
            <person name="Ganesan B."/>
            <person name="Xie Y."/>
            <person name="Rawsthorne H."/>
            <person name="Tamir D."/>
            <person name="Parker C."/>
            <person name="Breidt F."/>
            <person name="Broadbent J.R."/>
            <person name="Hutkins R."/>
            <person name="O'Sullivan D."/>
            <person name="Steele J."/>
            <person name="Unlu G."/>
            <person name="Saier M.H. Jr."/>
            <person name="Klaenhammer T."/>
            <person name="Richardson P."/>
            <person name="Kozyavkin S."/>
            <person name="Weimer B.C."/>
            <person name="Mills D.A."/>
        </authorList>
    </citation>
    <scope>NUCLEOTIDE SEQUENCE [LARGE SCALE GENOMIC DNA]</scope>
    <source>
        <strain>ATCC BAA-331 / PSU-1</strain>
    </source>
</reference>
<feature type="chain" id="PRO_1000047076" description="Citrate lyase acyl carrier protein">
    <location>
        <begin position="1"/>
        <end position="97"/>
    </location>
</feature>
<feature type="modified residue" description="O-(phosphoribosyl dephospho-coenzyme A)serine" evidence="1">
    <location>
        <position position="14"/>
    </location>
</feature>
<sequence length="97" mass="10578">MEIKKTALAGTTESSDIQITLSKGNDGIDVDLTSDVKKQFGDQIVKVITDTLNKFQITNAKVRAVDKGALDCVIKARTITAASRALNQEDQINWEVL</sequence>